<evidence type="ECO:0000250" key="1"/>
<evidence type="ECO:0000255" key="2">
    <source>
        <dbReference type="PROSITE-ProRule" id="PRU00176"/>
    </source>
</evidence>
<evidence type="ECO:0000269" key="3">
    <source>
    </source>
</evidence>
<evidence type="ECO:0000269" key="4">
    <source>
    </source>
</evidence>
<evidence type="ECO:0000269" key="5">
    <source>
    </source>
</evidence>
<evidence type="ECO:0000303" key="6">
    <source>
    </source>
</evidence>
<evidence type="ECO:0000303" key="7">
    <source>
    </source>
</evidence>
<evidence type="ECO:0000305" key="8"/>
<keyword id="KW-0877">Alternative promoter usage</keyword>
<keyword id="KW-0025">Alternative splicing</keyword>
<keyword id="KW-0963">Cytoplasm</keyword>
<keyword id="KW-0238">DNA-binding</keyword>
<keyword id="KW-0539">Nucleus</keyword>
<keyword id="KW-1267">Proteomics identification</keyword>
<keyword id="KW-1185">Reference proteome</keyword>
<keyword id="KW-0694">RNA-binding</keyword>
<comment type="function">
    <text evidence="4">May confer resistance to the antitumor agent cisplatin. Binds to DNA and RNA.</text>
</comment>
<comment type="subunit">
    <text evidence="1">Homodimer.</text>
</comment>
<comment type="interaction">
    <interactant intactId="EBI-10288724">
        <id>Q8NG50</id>
    </interactant>
    <interactant intactId="EBI-10961624">
        <id>Q2TAC2-2</id>
        <label>CCDC57</label>
    </interactant>
    <organismsDiffer>false</organismsDiffer>
    <experiments>5</experiments>
</comment>
<comment type="interaction">
    <interactant intactId="EBI-10288724">
        <id>Q8NG50</id>
    </interactant>
    <interactant intactId="EBI-1050897">
        <id>P26441</id>
        <label>CNTF</label>
    </interactant>
    <organismsDiffer>false</organismsDiffer>
    <experiments>3</experiments>
</comment>
<comment type="interaction">
    <interactant intactId="EBI-10288724">
        <id>Q8NG50</id>
    </interactant>
    <interactant intactId="EBI-748896">
        <id>Q96HT8</id>
        <label>MRFAP1L1</label>
    </interactant>
    <organismsDiffer>false</organismsDiffer>
    <experiments>3</experiments>
</comment>
<comment type="interaction">
    <interactant intactId="EBI-10288724">
        <id>Q8NG50</id>
    </interactant>
    <interactant intactId="EBI-706448">
        <id>P43351</id>
        <label>RAD52</label>
    </interactant>
    <organismsDiffer>false</organismsDiffer>
    <experiments>5</experiments>
</comment>
<comment type="interaction">
    <interactant intactId="EBI-10288724">
        <id>Q8NG50</id>
    </interactant>
    <interactant intactId="EBI-748391">
        <id>Q9BWG6</id>
        <label>SCNM1</label>
    </interactant>
    <organismsDiffer>false</organismsDiffer>
    <experiments>5</experiments>
</comment>
<comment type="subcellular location">
    <subcellularLocation>
        <location evidence="5">Nucleus</location>
    </subcellularLocation>
    <subcellularLocation>
        <location evidence="5">Cytoplasm</location>
    </subcellularLocation>
    <subcellularLocation>
        <location evidence="5">Nucleus</location>
        <location evidence="5">Nucleolus</location>
    </subcellularLocation>
    <text>Isoform 3 and isoform 10 are predominantly nuclear and nucleolar. After treatment with proteasomal inhibitors and mild heat-shock stress, isoform 1, isoform 3, isoform 5, isoform 7, isoform 8 and isoform 10 are relocalized to the nucleolus as dot-like or irregular subnuclear structures. Isoform 1 colocalized with nuclear promyelocytic leukemia (PML) and Cajal bodies (CB); this association with nuclear bodies is enhanced in response to proteotoxic stress. Isoform 3, but not isoform 1 and isoform 5, is relocalized in nucleolar caps during transcriptional arrest.</text>
</comment>
<comment type="subcellular location">
    <molecule>Isoform 1</molecule>
    <subcellularLocation>
        <location>Cytoplasm</location>
    </subcellularLocation>
    <subcellularLocation>
        <location>Nucleus</location>
        <location>PML body</location>
    </subcellularLocation>
    <subcellularLocation>
        <location>Nucleus</location>
        <location>Cajal body</location>
    </subcellularLocation>
    <text>Isoform 1 is predominantly cytoplasmic. Isoform 1 colocalized with nuclear promyelocytic leukemia (PML) and Cajal bodies (CB); this association with nuclear bodies is enhanced in response to proteotoxic stress.</text>
</comment>
<comment type="alternative products">
    <event type="alternative promoter"/>
    <event type="alternative splicing"/>
    <isoform>
        <id>Q8NG50-1</id>
        <name>1</name>
        <name>RDM1alpha</name>
        <name>Long N-terminal form</name>
        <sequence type="displayed"/>
    </isoform>
    <isoform>
        <id>Q8NG50-2</id>
        <name>2</name>
        <name>DeltaN-RDM1alpha</name>
        <name>Short N-terminal form</name>
        <sequence type="described" ref="VSP_029648"/>
    </isoform>
    <isoform>
        <id>Q8NG50-3</id>
        <name>3</name>
        <name>RDM1beta</name>
        <sequence type="described" ref="VSP_029653 VSP_029654"/>
    </isoform>
    <isoform>
        <id>Q8NG50-4</id>
        <name>4</name>
        <name>DeltaN-RDM1beta</name>
        <sequence type="described" ref="VSP_029648 VSP_029653 VSP_029654"/>
    </isoform>
    <isoform>
        <id>Q8NG50-5</id>
        <name>5</name>
        <name>RDM1gamma</name>
        <sequence type="described" ref="VSP_029655"/>
    </isoform>
    <isoform>
        <id>Q8NG50-6</id>
        <name>6</name>
        <name>DeltaN-RDM1gamma</name>
        <sequence type="described" ref="VSP_029648 VSP_029655"/>
    </isoform>
    <isoform>
        <id>Q8NG50-7</id>
        <name>7</name>
        <name>RDM1delta</name>
        <sequence type="described" ref="VSP_029649 VSP_029653 VSP_029654"/>
    </isoform>
    <isoform>
        <id>Q8NG50-8</id>
        <name>8</name>
        <name>RDM1epsilon</name>
        <sequence type="described" ref="VSP_037151 VSP_029654"/>
    </isoform>
    <isoform>
        <id>Q8NG50-9</id>
        <name>9</name>
        <name>DeltaN-RDM1epsilon</name>
        <sequence type="described" ref="VSP_029648 VSP_037151 VSP_029654"/>
    </isoform>
    <isoform>
        <id>Q8NG50-10</id>
        <name>10</name>
        <name>RDM1zeta</name>
        <sequence type="described" ref="VSP_029650"/>
    </isoform>
    <isoform>
        <id>Q8NG50-11</id>
        <name>11</name>
        <name>DeltaN-RDM1zeta</name>
        <sequence type="described" ref="VSP_029648 VSP_029650"/>
    </isoform>
    <isoform>
        <id>Q8NG50-12</id>
        <name>12</name>
        <sequence type="described" ref="VSP_044856"/>
    </isoform>
</comment>
<comment type="tissue specificity">
    <text evidence="4">Expressed in testis.</text>
</comment>
<comment type="induction">
    <text evidence="5">Heat-shock stress up-regulated mRNA expression of isoform 10 and isoform 11. Heat-shock stress down-regulated short N-terminal mRNA expression of isoform 2, isoform 4, isoform 6 and isoform 9.</text>
</comment>
<comment type="domain">
    <text>C-terminal half (amino acids 134-284) contains cytoplasmic retention domains as well as determinants involved in its stress-induced nucleolar accumulation.</text>
</comment>
<comment type="miscellaneous">
    <molecule>Isoform 1</molecule>
    <text>Produced by alternative promoter usage.</text>
</comment>
<comment type="miscellaneous">
    <molecule>Isoform 2</molecule>
    <text evidence="8">Produced by alternative promoter usage.</text>
</comment>
<comment type="miscellaneous">
    <molecule>Isoform 3</molecule>
    <text evidence="8">Produced by alternative splicing of isoform 1.</text>
</comment>
<comment type="miscellaneous">
    <molecule>Isoform 4</molecule>
    <text evidence="8">Produced by alternative splicing of isoform 2.</text>
</comment>
<comment type="miscellaneous">
    <molecule>Isoform 5</molecule>
    <text evidence="8">Produced by alternative splicing of isoform 1.</text>
</comment>
<comment type="miscellaneous">
    <molecule>Isoform 6</molecule>
    <text evidence="8">Produced by alternative splicing of isoform 2.</text>
</comment>
<comment type="miscellaneous">
    <molecule>Isoform 7</molecule>
    <text evidence="8">Produced by alternative splicing of isoform 1.</text>
</comment>
<comment type="miscellaneous">
    <molecule>Isoform 8</molecule>
    <text evidence="8">Produced by alternative splicing of isoform 1.</text>
</comment>
<comment type="miscellaneous">
    <molecule>Isoform 9</molecule>
    <text evidence="8">Produced by alternative splicing of isoform 2.</text>
</comment>
<comment type="miscellaneous">
    <molecule>Isoform 10</molecule>
    <text evidence="8">Produced by alternative splicing of isoform 1. In cells exposed to a mild heat schock.</text>
</comment>
<comment type="miscellaneous">
    <molecule>Isoform 11</molecule>
    <text evidence="8">Produced by alternative splicing of isoform 2. In cells exposed to a mild heat schock.</text>
</comment>
<sequence>MAELVPFAVPIESDKTLLVWELSSGPTAEALHHSLFTAFSQFGLLYSVRVFPNAAVAHPGFYAVIKFYSARAAHRAQKACDRKQLFQKSPVKVRLGTRHKAVQHQALALNSSKCQELANYYFGFNGCSKRIIKLQELSDLEERENEDSMVPLPKQSLKFFCALEVVLPSCDCRSPGIGLVEEPMDKVEEGPLSFLMKRKTAQKLAIQKALSDAFQKLLIVVLESGKIAVEYRPSEDIVGVRCEEELHGLIQVPCSPWKQYGQEEEGYLSDFSLEEEEFRLPELD</sequence>
<proteinExistence type="evidence at protein level"/>
<reference key="1">
    <citation type="journal article" date="2005" name="J. Biol. Chem.">
        <title>RDM1, a novel RNA recognition motif (RRM)-containing protein involved in the cell response to cisplatin in vertebrates.</title>
        <authorList>
            <person name="Hamimes S."/>
            <person name="Arakawa H."/>
            <person name="Stasiak A.Z."/>
            <person name="Kierzek A.M."/>
            <person name="Hirano S."/>
            <person name="Yang Y.-G."/>
            <person name="Takata M."/>
            <person name="Stasiak A."/>
            <person name="Buerstedde J.M."/>
            <person name="Van Dyck E."/>
        </authorList>
    </citation>
    <scope>NUCLEOTIDE SEQUENCE [MRNA] (ISOFORM 1)</scope>
    <scope>FUNCTION</scope>
    <scope>TISSUE SPECIFICITY</scope>
</reference>
<reference key="2">
    <citation type="journal article" date="2007" name="Nucleic Acids Res.">
        <title>Subcellular distribution of human RDM1 protein isoforms and their nucleolar accumulation in response to heat shock and proteotoxic stress.</title>
        <authorList>
            <person name="Messaoudi L."/>
            <person name="Yang Y.-G."/>
            <person name="Kinomura A."/>
            <person name="Stavreva D.A."/>
            <person name="Yan G."/>
            <person name="Bortolin-Cavaille M.-L."/>
            <person name="Arakawa H."/>
            <person name="Buerstedde J.-M."/>
            <person name="Hainaut P."/>
            <person name="Cavaille J."/>
            <person name="Takata M."/>
            <person name="Van Dyck E."/>
        </authorList>
    </citation>
    <scope>NUCLEOTIDE SEQUENCE [MRNA] (ISOFORMS 2; 3; 4; 5; 6; 7; 8; 9; 10 AND 11)</scope>
    <scope>SUBCELLULAR LOCATION</scope>
    <scope>INDUCTION</scope>
    <scope>MUTAGENESIS OF 98-ARG--LYS-100 AND 120-TYR--PHE-122</scope>
    <scope>ALTERNATIVE PROMOTER USAGE</scope>
    <scope>ALTERNATIVE SPLICING (ISOFORMS 1; 2; 3; 4; 5; 6; 7; 8; 9; 10 AND 11)</scope>
</reference>
<reference key="3">
    <citation type="journal article" date="2006" name="Nature">
        <title>DNA sequence of human chromosome 17 and analysis of rearrangement in the human lineage.</title>
        <authorList>
            <person name="Zody M.C."/>
            <person name="Garber M."/>
            <person name="Adams D.J."/>
            <person name="Sharpe T."/>
            <person name="Harrow J."/>
            <person name="Lupski J.R."/>
            <person name="Nicholson C."/>
            <person name="Searle S.M."/>
            <person name="Wilming L."/>
            <person name="Young S.K."/>
            <person name="Abouelleil A."/>
            <person name="Allen N.R."/>
            <person name="Bi W."/>
            <person name="Bloom T."/>
            <person name="Borowsky M.L."/>
            <person name="Bugalter B.E."/>
            <person name="Butler J."/>
            <person name="Chang J.L."/>
            <person name="Chen C.-K."/>
            <person name="Cook A."/>
            <person name="Corum B."/>
            <person name="Cuomo C.A."/>
            <person name="de Jong P.J."/>
            <person name="DeCaprio D."/>
            <person name="Dewar K."/>
            <person name="FitzGerald M."/>
            <person name="Gilbert J."/>
            <person name="Gibson R."/>
            <person name="Gnerre S."/>
            <person name="Goldstein S."/>
            <person name="Grafham D.V."/>
            <person name="Grocock R."/>
            <person name="Hafez N."/>
            <person name="Hagopian D.S."/>
            <person name="Hart E."/>
            <person name="Norman C.H."/>
            <person name="Humphray S."/>
            <person name="Jaffe D.B."/>
            <person name="Jones M."/>
            <person name="Kamal M."/>
            <person name="Khodiyar V.K."/>
            <person name="LaButti K."/>
            <person name="Laird G."/>
            <person name="Lehoczky J."/>
            <person name="Liu X."/>
            <person name="Lokyitsang T."/>
            <person name="Loveland J."/>
            <person name="Lui A."/>
            <person name="Macdonald P."/>
            <person name="Major J.E."/>
            <person name="Matthews L."/>
            <person name="Mauceli E."/>
            <person name="McCarroll S.A."/>
            <person name="Mihalev A.H."/>
            <person name="Mudge J."/>
            <person name="Nguyen C."/>
            <person name="Nicol R."/>
            <person name="O'Leary S.B."/>
            <person name="Osoegawa K."/>
            <person name="Schwartz D.C."/>
            <person name="Shaw-Smith C."/>
            <person name="Stankiewicz P."/>
            <person name="Steward C."/>
            <person name="Swarbreck D."/>
            <person name="Venkataraman V."/>
            <person name="Whittaker C.A."/>
            <person name="Yang X."/>
            <person name="Zimmer A.R."/>
            <person name="Bradley A."/>
            <person name="Hubbard T."/>
            <person name="Birren B.W."/>
            <person name="Rogers J."/>
            <person name="Lander E.S."/>
            <person name="Nusbaum C."/>
        </authorList>
    </citation>
    <scope>NUCLEOTIDE SEQUENCE [LARGE SCALE GENOMIC DNA]</scope>
</reference>
<reference key="4">
    <citation type="journal article" date="2004" name="Genome Res.">
        <title>The status, quality, and expansion of the NIH full-length cDNA project: the Mammalian Gene Collection (MGC).</title>
        <authorList>
            <consortium name="The MGC Project Team"/>
        </authorList>
    </citation>
    <scope>NUCLEOTIDE SEQUENCE [LARGE SCALE MRNA] (ISOFORMS 1 AND 12)</scope>
    <scope>VARIANTS ARG-32 AND TRP-127</scope>
</reference>
<feature type="chain" id="PRO_0000299528" description="RAD52 motif-containing protein 1">
    <location>
        <begin position="1"/>
        <end position="284"/>
    </location>
</feature>
<feature type="domain" description="RRM" evidence="2">
    <location>
        <begin position="15"/>
        <end position="98"/>
    </location>
</feature>
<feature type="region of interest" description="Necessary for nuclear localization and for nucleolar accumulation in response to heat shock">
    <location>
        <begin position="1"/>
        <end position="92"/>
    </location>
</feature>
<feature type="region of interest" description="Necessary for nuclear and nucleolar localization">
    <location>
        <begin position="90"/>
        <end position="133"/>
    </location>
</feature>
<feature type="splice variant" id="VSP_029648" description="In isoform 2, isoform 4, isoform 6, isoform 9 and isoform 11." evidence="7">
    <original>MAELVPFAVPIESDKTLLVWELSSGPTAEALH</original>
    <variation>MHLLVPPPQ</variation>
    <location>
        <begin position="1"/>
        <end position="32"/>
    </location>
</feature>
<feature type="splice variant" id="VSP_029649" description="In isoform 7." evidence="7">
    <location>
        <begin position="33"/>
        <end position="92"/>
    </location>
</feature>
<feature type="splice variant" id="VSP_029650" description="In isoform 10 and isoform 11." evidence="7">
    <location>
        <begin position="134"/>
        <end position="251"/>
    </location>
</feature>
<feature type="splice variant" id="VSP_029653" description="In isoform 3, isoform 4 and isoform 7." evidence="7">
    <original>LQELSD</original>
    <variation>DHYHSL</variation>
    <location>
        <begin position="134"/>
        <end position="139"/>
    </location>
</feature>
<feature type="splice variant" id="VSP_037151" description="In isoform 8 and isoform 9." evidence="7">
    <original>LQELSD</original>
    <variation>KVVK</variation>
    <location>
        <begin position="134"/>
        <end position="139"/>
    </location>
</feature>
<feature type="splice variant" id="VSP_029654" description="In isoform 3, isoform 4, isoform 7, isoform 8 and isoform 9." evidence="7">
    <location>
        <begin position="140"/>
        <end position="284"/>
    </location>
</feature>
<feature type="splice variant" id="VSP_029655" description="In isoform 5 and isoform 6." evidence="7">
    <location>
        <begin position="190"/>
        <end position="222"/>
    </location>
</feature>
<feature type="splice variant" id="VSP_044856" description="In isoform 12." evidence="6">
    <original>ESGKIAVEYRPSEDIVGVRCEEELHGLIQVPCSPWKQYGQEEEGYLSDFSLEEEEFRLPELD</original>
    <variation>GKTVLIILEVLQFQ</variation>
    <location>
        <begin position="223"/>
        <end position="284"/>
    </location>
</feature>
<feature type="sequence variant" id="VAR_034835" description="In dbSNP:rs2280786." evidence="3">
    <original>H</original>
    <variation>R</variation>
    <location>
        <position position="32"/>
    </location>
</feature>
<feature type="sequence variant" id="VAR_034836" description="In dbSNP:rs2251660." evidence="3">
    <original>C</original>
    <variation>W</variation>
    <location>
        <position position="127"/>
    </location>
</feature>
<feature type="mutagenesis site" description="Reduces its nuclear and nucleolar accumulation. Increases its cytoplasmic accumulation." evidence="5">
    <original>RHK</original>
    <variation>AAA</variation>
    <location>
        <begin position="98"/>
        <end position="100"/>
    </location>
</feature>
<feature type="mutagenesis site" description="Does not affect its subcellular distribution." evidence="5">
    <original>YYF</original>
    <variation>AAA</variation>
    <location>
        <begin position="120"/>
        <end position="122"/>
    </location>
</feature>
<feature type="sequence conflict" description="In Ref. 2; BC038301." evidence="8" ref="2">
    <original>Y</original>
    <variation>C</variation>
    <location>
        <position position="121"/>
    </location>
</feature>
<gene>
    <name type="primary">RDM1</name>
    <name type="synonym">RAD52B</name>
</gene>
<organism>
    <name type="scientific">Homo sapiens</name>
    <name type="common">Human</name>
    <dbReference type="NCBI Taxonomy" id="9606"/>
    <lineage>
        <taxon>Eukaryota</taxon>
        <taxon>Metazoa</taxon>
        <taxon>Chordata</taxon>
        <taxon>Craniata</taxon>
        <taxon>Vertebrata</taxon>
        <taxon>Euteleostomi</taxon>
        <taxon>Mammalia</taxon>
        <taxon>Eutheria</taxon>
        <taxon>Euarchontoglires</taxon>
        <taxon>Primates</taxon>
        <taxon>Haplorrhini</taxon>
        <taxon>Catarrhini</taxon>
        <taxon>Hominidae</taxon>
        <taxon>Homo</taxon>
    </lineage>
</organism>
<dbReference type="EMBL" id="AB080728">
    <property type="protein sequence ID" value="BAC02562.1"/>
    <property type="molecule type" value="mRNA"/>
</dbReference>
<dbReference type="EMBL" id="EF488473">
    <property type="protein sequence ID" value="ABS86950.1"/>
    <property type="molecule type" value="mRNA"/>
</dbReference>
<dbReference type="EMBL" id="EF488474">
    <property type="protein sequence ID" value="ABS86951.1"/>
    <property type="molecule type" value="mRNA"/>
</dbReference>
<dbReference type="EMBL" id="EF488475">
    <property type="protein sequence ID" value="ABS86952.1"/>
    <property type="molecule type" value="mRNA"/>
</dbReference>
<dbReference type="EMBL" id="EF488476">
    <property type="protein sequence ID" value="ABS86953.1"/>
    <property type="molecule type" value="mRNA"/>
</dbReference>
<dbReference type="EMBL" id="EF488477">
    <property type="protein sequence ID" value="ABS86954.1"/>
    <property type="molecule type" value="mRNA"/>
</dbReference>
<dbReference type="EMBL" id="EF488478">
    <property type="protein sequence ID" value="ABS86955.1"/>
    <property type="molecule type" value="mRNA"/>
</dbReference>
<dbReference type="EMBL" id="EF488479">
    <property type="protein sequence ID" value="ABS86956.1"/>
    <property type="molecule type" value="mRNA"/>
</dbReference>
<dbReference type="EMBL" id="EF488480">
    <property type="protein sequence ID" value="ABS86957.1"/>
    <property type="molecule type" value="mRNA"/>
</dbReference>
<dbReference type="EMBL" id="EF488481">
    <property type="protein sequence ID" value="ABS86958.1"/>
    <property type="molecule type" value="mRNA"/>
</dbReference>
<dbReference type="EMBL" id="EF488482">
    <property type="protein sequence ID" value="ABS86959.1"/>
    <property type="molecule type" value="mRNA"/>
</dbReference>
<dbReference type="EMBL" id="AC004675">
    <property type="status" value="NOT_ANNOTATED_CDS"/>
    <property type="molecule type" value="Genomic_DNA"/>
</dbReference>
<dbReference type="EMBL" id="AC015849">
    <property type="status" value="NOT_ANNOTATED_CDS"/>
    <property type="molecule type" value="Genomic_DNA"/>
</dbReference>
<dbReference type="EMBL" id="BC038301">
    <property type="status" value="NOT_ANNOTATED_CDS"/>
    <property type="molecule type" value="mRNA"/>
</dbReference>
<dbReference type="EMBL" id="BC127190">
    <property type="protein sequence ID" value="AAI27191.1"/>
    <property type="molecule type" value="mRNA"/>
</dbReference>
<dbReference type="EMBL" id="BM559857">
    <property type="status" value="NOT_ANNOTATED_CDS"/>
    <property type="molecule type" value="mRNA"/>
</dbReference>
<dbReference type="CCDS" id="CCDS11301.1">
    <molecule id="Q8NG50-1"/>
</dbReference>
<dbReference type="CCDS" id="CCDS42299.1">
    <molecule id="Q8NG50-12"/>
</dbReference>
<dbReference type="CCDS" id="CCDS54108.1">
    <molecule id="Q8NG50-4"/>
</dbReference>
<dbReference type="CCDS" id="CCDS54109.1">
    <molecule id="Q8NG50-2"/>
</dbReference>
<dbReference type="CCDS" id="CCDS54110.1">
    <molecule id="Q8NG50-10"/>
</dbReference>
<dbReference type="CCDS" id="CCDS54111.1">
    <molecule id="Q8NG50-5"/>
</dbReference>
<dbReference type="CCDS" id="CCDS59280.1">
    <molecule id="Q8NG50-11"/>
</dbReference>
<dbReference type="CCDS" id="CCDS59281.1">
    <molecule id="Q8NG50-6"/>
</dbReference>
<dbReference type="CCDS" id="CCDS82109.1">
    <molecule id="Q8NG50-3"/>
</dbReference>
<dbReference type="RefSeq" id="NP_001030008.1">
    <molecule id="Q8NG50-12"/>
    <property type="nucleotide sequence ID" value="NM_001034836.2"/>
</dbReference>
<dbReference type="RefSeq" id="NP_001156592.1">
    <molecule id="Q8NG50-10"/>
    <property type="nucleotide sequence ID" value="NM_001163120.2"/>
</dbReference>
<dbReference type="RefSeq" id="NP_001156593.1">
    <molecule id="Q8NG50-5"/>
    <property type="nucleotide sequence ID" value="NM_001163121.2"/>
</dbReference>
<dbReference type="RefSeq" id="NP_001156594.1">
    <molecule id="Q8NG50-6"/>
    <property type="nucleotide sequence ID" value="NM_001163122.1"/>
</dbReference>
<dbReference type="RefSeq" id="NP_001156596.1">
    <molecule id="Q8NG50-11"/>
    <property type="nucleotide sequence ID" value="NM_001163124.1"/>
</dbReference>
<dbReference type="RefSeq" id="NP_001156597.1">
    <molecule id="Q8NG50-4"/>
    <property type="nucleotide sequence ID" value="NM_001163125.1"/>
</dbReference>
<dbReference type="RefSeq" id="NP_001156602.1">
    <molecule id="Q8NG50-2"/>
    <property type="nucleotide sequence ID" value="NM_001163130.1"/>
</dbReference>
<dbReference type="RefSeq" id="NP_001317123.1">
    <molecule id="Q8NG50-3"/>
    <property type="nucleotide sequence ID" value="NM_001330194.2"/>
</dbReference>
<dbReference type="RefSeq" id="NP_663629.1">
    <molecule id="Q8NG50-1"/>
    <property type="nucleotide sequence ID" value="NM_145654.4"/>
</dbReference>
<dbReference type="BioGRID" id="128384">
    <property type="interactions" value="8"/>
</dbReference>
<dbReference type="FunCoup" id="Q8NG50">
    <property type="interactions" value="728"/>
</dbReference>
<dbReference type="IntAct" id="Q8NG50">
    <property type="interactions" value="7"/>
</dbReference>
<dbReference type="STRING" id="9606.ENSP00000483549"/>
<dbReference type="GlyGen" id="Q8NG50">
    <property type="glycosylation" value="2 sites, 1 O-linked glycan (1 site)"/>
</dbReference>
<dbReference type="iPTMnet" id="Q8NG50"/>
<dbReference type="PhosphoSitePlus" id="Q8NG50"/>
<dbReference type="BioMuta" id="RDM1"/>
<dbReference type="DMDM" id="74762574"/>
<dbReference type="jPOST" id="Q8NG50"/>
<dbReference type="MassIVE" id="Q8NG50"/>
<dbReference type="PaxDb" id="9606-ENSP00000483549"/>
<dbReference type="PeptideAtlas" id="Q8NG50"/>
<dbReference type="Antibodypedia" id="73933">
    <property type="antibodies" value="118 antibodies from 22 providers"/>
</dbReference>
<dbReference type="DNASU" id="201299"/>
<dbReference type="Ensembl" id="ENST00000611538.4">
    <molecule id="Q8NG50-10"/>
    <property type="protein sequence ID" value="ENSP00000478597.1"/>
    <property type="gene ID" value="ENSG00000276432.4"/>
</dbReference>
<dbReference type="Ensembl" id="ENST00000612980.4">
    <molecule id="Q8NG50-10"/>
    <property type="protein sequence ID" value="ENSP00000483387.1"/>
    <property type="gene ID" value="ENSG00000278023.7"/>
</dbReference>
<dbReference type="Ensembl" id="ENST00000613308.4">
    <molecule id="Q8NG50-12"/>
    <property type="protein sequence ID" value="ENSP00000482288.1"/>
    <property type="gene ID" value="ENSG00000278023.7"/>
</dbReference>
<dbReference type="Ensembl" id="ENST00000613554.2">
    <molecule id="Q8NG50-4"/>
    <property type="protein sequence ID" value="ENSP00000481726.1"/>
    <property type="gene ID" value="ENSG00000276432.4"/>
</dbReference>
<dbReference type="Ensembl" id="ENST00000615024.4">
    <molecule id="Q8NG50-4"/>
    <property type="protein sequence ID" value="ENSP00000481648.1"/>
    <property type="gene ID" value="ENSG00000278023.7"/>
</dbReference>
<dbReference type="Ensembl" id="ENST00000615288.4">
    <molecule id="Q8NG50-8"/>
    <property type="protein sequence ID" value="ENSP00000477869.1"/>
    <property type="gene ID" value="ENSG00000278023.7"/>
</dbReference>
<dbReference type="Ensembl" id="ENST00000615378.1">
    <molecule id="Q8NG50-4"/>
    <property type="protein sequence ID" value="ENSP00000480131.1"/>
    <property type="gene ID" value="ENSG00000278023.7"/>
</dbReference>
<dbReference type="Ensembl" id="ENST00000616596.4">
    <molecule id="Q8NG50-5"/>
    <property type="protein sequence ID" value="ENSP00000478915.1"/>
    <property type="gene ID" value="ENSG00000278023.7"/>
</dbReference>
<dbReference type="Ensembl" id="ENST00000616735.4">
    <molecule id="Q8NG50-5"/>
    <property type="protein sequence ID" value="ENSP00000483566.1"/>
    <property type="gene ID" value="ENSG00000276432.4"/>
</dbReference>
<dbReference type="Ensembl" id="ENST00000617591.4">
    <molecule id="Q8NG50-11"/>
    <property type="protein sequence ID" value="ENSP00000479622.1"/>
    <property type="gene ID" value="ENSG00000278023.7"/>
</dbReference>
<dbReference type="Ensembl" id="ENST00000618461.4">
    <molecule id="Q8NG50-1"/>
    <property type="protein sequence ID" value="ENSP00000481061.1"/>
    <property type="gene ID" value="ENSG00000276432.4"/>
</dbReference>
<dbReference type="Ensembl" id="ENST00000618511.4">
    <molecule id="Q8NG50-9"/>
    <property type="protein sequence ID" value="ENSP00000477995.1"/>
    <property type="gene ID" value="ENSG00000278023.7"/>
</dbReference>
<dbReference type="Ensembl" id="ENST00000619193.4">
    <molecule id="Q8NG50-3"/>
    <property type="protein sequence ID" value="ENSP00000482981.1"/>
    <property type="gene ID" value="ENSG00000278023.7"/>
</dbReference>
<dbReference type="Ensembl" id="ENST00000619262.4">
    <molecule id="Q8NG50-2"/>
    <property type="protein sequence ID" value="ENSP00000479310.1"/>
    <property type="gene ID" value="ENSG00000278023.7"/>
</dbReference>
<dbReference type="Ensembl" id="ENST00000619368.4">
    <molecule id="Q8NG50-7"/>
    <property type="protein sequence ID" value="ENSP00000478131.1"/>
    <property type="gene ID" value="ENSG00000278023.7"/>
</dbReference>
<dbReference type="Ensembl" id="ENST00000619828.4">
    <molecule id="Q8NG50-6"/>
    <property type="protein sequence ID" value="ENSP00000483933.1"/>
    <property type="gene ID" value="ENSG00000278023.7"/>
</dbReference>
<dbReference type="Ensembl" id="ENST00000620284.5">
    <molecule id="Q8NG50-1"/>
    <property type="protein sequence ID" value="ENSP00000483549.1"/>
    <property type="gene ID" value="ENSG00000278023.7"/>
</dbReference>
<dbReference type="Ensembl" id="ENST00000632131.1">
    <molecule id="Q8NG50-3"/>
    <property type="protein sequence ID" value="ENSP00000487602.1"/>
    <property type="gene ID" value="ENSG00000276432.4"/>
</dbReference>
<dbReference type="Ensembl" id="ENST00000632857.1">
    <molecule id="Q8NG50-2"/>
    <property type="protein sequence ID" value="ENSP00000488876.1"/>
    <property type="gene ID" value="ENSG00000276432.4"/>
</dbReference>
<dbReference type="Ensembl" id="ENST00000632922.1">
    <molecule id="Q8NG50-11"/>
    <property type="protein sequence ID" value="ENSP00000488806.1"/>
    <property type="gene ID" value="ENSG00000276432.4"/>
</dbReference>
<dbReference type="Ensembl" id="ENST00000632931.1">
    <molecule id="Q8NG50-12"/>
    <property type="protein sequence ID" value="ENSP00000487935.1"/>
    <property type="gene ID" value="ENSG00000276432.4"/>
</dbReference>
<dbReference type="Ensembl" id="ENST00000633122.1">
    <molecule id="Q8NG50-6"/>
    <property type="protein sequence ID" value="ENSP00000488617.1"/>
    <property type="gene ID" value="ENSG00000276432.4"/>
</dbReference>
<dbReference type="Ensembl" id="ENST00000633612.1">
    <molecule id="Q8NG50-9"/>
    <property type="protein sequence ID" value="ENSP00000488160.1"/>
    <property type="gene ID" value="ENSG00000276432.4"/>
</dbReference>
<dbReference type="Ensembl" id="ENST00000633984.1">
    <molecule id="Q8NG50-8"/>
    <property type="protein sequence ID" value="ENSP00000488583.1"/>
    <property type="gene ID" value="ENSG00000276432.4"/>
</dbReference>
<dbReference type="Ensembl" id="ENST00000634031.1">
    <molecule id="Q8NG50-7"/>
    <property type="protein sequence ID" value="ENSP00000487863.1"/>
    <property type="gene ID" value="ENSG00000276432.4"/>
</dbReference>
<dbReference type="Ensembl" id="ENST00000634177.1">
    <molecule id="Q8NG50-4"/>
    <property type="protein sequence ID" value="ENSP00000487670.1"/>
    <property type="gene ID" value="ENSG00000276432.4"/>
</dbReference>
<dbReference type="GeneID" id="201299"/>
<dbReference type="KEGG" id="hsa:201299"/>
<dbReference type="MANE-Select" id="ENST00000620284.5">
    <property type="protein sequence ID" value="ENSP00000483549.1"/>
    <property type="RefSeq nucleotide sequence ID" value="NM_145654.4"/>
    <property type="RefSeq protein sequence ID" value="NP_663629.1"/>
</dbReference>
<dbReference type="UCSC" id="uc002hkg.5">
    <molecule id="Q8NG50-1"/>
    <property type="organism name" value="human"/>
</dbReference>
<dbReference type="AGR" id="HGNC:19950"/>
<dbReference type="CTD" id="201299"/>
<dbReference type="DisGeNET" id="201299"/>
<dbReference type="GeneCards" id="RDM1"/>
<dbReference type="HGNC" id="HGNC:19950">
    <property type="gene designation" value="RDM1"/>
</dbReference>
<dbReference type="HPA" id="ENSG00000278023">
    <property type="expression patterns" value="Tissue enriched (testis)"/>
</dbReference>
<dbReference type="MIM" id="612896">
    <property type="type" value="gene"/>
</dbReference>
<dbReference type="neXtProt" id="NX_Q8NG50"/>
<dbReference type="OpenTargets" id="ENSG00000278023"/>
<dbReference type="PharmGKB" id="PA134932526"/>
<dbReference type="VEuPathDB" id="HostDB:ENSG00000278023"/>
<dbReference type="eggNOG" id="ENOG502RXM9">
    <property type="taxonomic scope" value="Eukaryota"/>
</dbReference>
<dbReference type="GeneTree" id="ENSGT00390000018397"/>
<dbReference type="HOGENOM" id="CLU_2120275_0_0_1"/>
<dbReference type="InParanoid" id="Q8NG50"/>
<dbReference type="OMA" id="PAYECRS"/>
<dbReference type="OrthoDB" id="6287754at2759"/>
<dbReference type="PAN-GO" id="Q8NG50">
    <property type="GO annotations" value="1 GO annotation based on evolutionary models"/>
</dbReference>
<dbReference type="PhylomeDB" id="Q8NG50"/>
<dbReference type="TreeFam" id="TF101222"/>
<dbReference type="PathwayCommons" id="Q8NG50"/>
<dbReference type="SignaLink" id="Q8NG50"/>
<dbReference type="BioGRID-ORCS" id="201299">
    <property type="hits" value="72 hits in 1148 CRISPR screens"/>
</dbReference>
<dbReference type="CD-CODE" id="91857CE7">
    <property type="entry name" value="Nucleolus"/>
</dbReference>
<dbReference type="GenomeRNAi" id="201299"/>
<dbReference type="Pharos" id="Q8NG50">
    <property type="development level" value="Tbio"/>
</dbReference>
<dbReference type="PRO" id="PR:Q8NG50"/>
<dbReference type="Proteomes" id="UP000005640">
    <property type="component" value="Chromosome 17"/>
</dbReference>
<dbReference type="RNAct" id="Q8NG50">
    <property type="molecule type" value="protein"/>
</dbReference>
<dbReference type="Bgee" id="ENSG00000278023">
    <property type="expression patterns" value="Expressed in primordial germ cell in gonad and 96 other cell types or tissues"/>
</dbReference>
<dbReference type="ExpressionAtlas" id="Q8NG50">
    <property type="expression patterns" value="baseline and differential"/>
</dbReference>
<dbReference type="GO" id="GO:0015030">
    <property type="term" value="C:Cajal body"/>
    <property type="evidence" value="ECO:0007669"/>
    <property type="project" value="UniProtKB-SubCell"/>
</dbReference>
<dbReference type="GO" id="GO:0005829">
    <property type="term" value="C:cytosol"/>
    <property type="evidence" value="ECO:0000314"/>
    <property type="project" value="HPA"/>
</dbReference>
<dbReference type="GO" id="GO:0005730">
    <property type="term" value="C:nucleolus"/>
    <property type="evidence" value="ECO:0000314"/>
    <property type="project" value="HPA"/>
</dbReference>
<dbReference type="GO" id="GO:0016605">
    <property type="term" value="C:PML body"/>
    <property type="evidence" value="ECO:0007669"/>
    <property type="project" value="UniProtKB-SubCell"/>
</dbReference>
<dbReference type="GO" id="GO:0003677">
    <property type="term" value="F:DNA binding"/>
    <property type="evidence" value="ECO:0007669"/>
    <property type="project" value="UniProtKB-KW"/>
</dbReference>
<dbReference type="GO" id="GO:0003723">
    <property type="term" value="F:RNA binding"/>
    <property type="evidence" value="ECO:0007669"/>
    <property type="project" value="UniProtKB-KW"/>
</dbReference>
<dbReference type="CDD" id="cd12364">
    <property type="entry name" value="RRM_RDM1"/>
    <property type="match status" value="1"/>
</dbReference>
<dbReference type="Gene3D" id="3.30.70.330">
    <property type="match status" value="1"/>
</dbReference>
<dbReference type="InterPro" id="IPR012677">
    <property type="entry name" value="Nucleotide-bd_a/b_plait_sf"/>
</dbReference>
<dbReference type="InterPro" id="IPR035979">
    <property type="entry name" value="RBD_domain_sf"/>
</dbReference>
<dbReference type="InterPro" id="IPR040224">
    <property type="entry name" value="RDM1"/>
</dbReference>
<dbReference type="InterPro" id="IPR034200">
    <property type="entry name" value="RDM1_RRM"/>
</dbReference>
<dbReference type="InterPro" id="IPR000504">
    <property type="entry name" value="RRM_dom"/>
</dbReference>
<dbReference type="PANTHER" id="PTHR31164">
    <property type="entry name" value="RAD52 MOTIF-CONTAINING PROTEIN 1"/>
    <property type="match status" value="1"/>
</dbReference>
<dbReference type="PANTHER" id="PTHR31164:SF1">
    <property type="entry name" value="RAD52 MOTIF-CONTAINING PROTEIN 1"/>
    <property type="match status" value="1"/>
</dbReference>
<dbReference type="Pfam" id="PF00076">
    <property type="entry name" value="RRM_1"/>
    <property type="match status" value="1"/>
</dbReference>
<dbReference type="SUPFAM" id="SSF54768">
    <property type="entry name" value="dsRNA-binding domain-like"/>
    <property type="match status" value="1"/>
</dbReference>
<dbReference type="SUPFAM" id="SSF54928">
    <property type="entry name" value="RNA-binding domain, RBD"/>
    <property type="match status" value="1"/>
</dbReference>
<dbReference type="PROSITE" id="PS50102">
    <property type="entry name" value="RRM"/>
    <property type="match status" value="1"/>
</dbReference>
<accession>Q8NG50</accession>
<accession>A0JP55</accession>
<accession>A8MV46</accession>
<accession>A8MY68</accession>
<accession>A8MZ92</accession>
<accession>A8RCS5</accession>
<accession>A8RCT0</accession>
<accession>A8RCT5</accession>
<accession>A8RCT8</accession>
<accession>A8RCU3</accession>
<accession>A8RCU8</accession>
<accession>A8RCW0</accession>
<accession>A8RCW5</accession>
<name>RDM1_HUMAN</name>
<protein>
    <recommendedName>
        <fullName>RAD52 motif-containing protein 1</fullName>
    </recommendedName>
    <alternativeName>
        <fullName>RAD52 homolog B</fullName>
    </alternativeName>
</protein>